<dbReference type="EMBL" id="L07803">
    <property type="protein sequence ID" value="AAA53064.1"/>
    <property type="molecule type" value="mRNA"/>
</dbReference>
<dbReference type="EMBL" id="AF549256">
    <property type="protein sequence ID" value="AAO16244.1"/>
    <property type="molecule type" value="Genomic_DNA"/>
</dbReference>
<dbReference type="EMBL" id="CH466630">
    <property type="protein sequence ID" value="EDL20481.1"/>
    <property type="molecule type" value="Genomic_DNA"/>
</dbReference>
<dbReference type="EMBL" id="M64866">
    <property type="protein sequence ID" value="AAA40432.1"/>
    <property type="molecule type" value="mRNA"/>
</dbReference>
<dbReference type="CCDS" id="CCDS49958.1"/>
<dbReference type="PIR" id="A42587">
    <property type="entry name" value="A42587"/>
</dbReference>
<dbReference type="RefSeq" id="NP_035711.2">
    <property type="nucleotide sequence ID" value="NM_011581.3"/>
</dbReference>
<dbReference type="SMR" id="Q03350"/>
<dbReference type="BioGRID" id="204176">
    <property type="interactions" value="6"/>
</dbReference>
<dbReference type="ComplexPortal" id="CPX-3023">
    <property type="entry name" value="Thrombospondin 2 complex"/>
</dbReference>
<dbReference type="FunCoup" id="Q03350">
    <property type="interactions" value="533"/>
</dbReference>
<dbReference type="IntAct" id="Q03350">
    <property type="interactions" value="2"/>
</dbReference>
<dbReference type="STRING" id="10090.ENSMUSP00000128308"/>
<dbReference type="GlyConnect" id="2765">
    <property type="glycosylation" value="1 N-Linked glycan (1 site)"/>
</dbReference>
<dbReference type="GlyCosmos" id="Q03350">
    <property type="glycosylation" value="7 sites, 1 glycan"/>
</dbReference>
<dbReference type="GlyGen" id="Q03350">
    <property type="glycosylation" value="7 sites, 2 N-linked glycans (2 sites)"/>
</dbReference>
<dbReference type="iPTMnet" id="Q03350"/>
<dbReference type="PhosphoSitePlus" id="Q03350"/>
<dbReference type="jPOST" id="Q03350"/>
<dbReference type="PaxDb" id="10090-ENSMUSP00000128308"/>
<dbReference type="PeptideAtlas" id="Q03350"/>
<dbReference type="ProteomicsDB" id="297997"/>
<dbReference type="Pumba" id="Q03350"/>
<dbReference type="Antibodypedia" id="33564">
    <property type="antibodies" value="236 antibodies from 26 providers"/>
</dbReference>
<dbReference type="DNASU" id="21826"/>
<dbReference type="Ensembl" id="ENSMUST00000170872.3">
    <property type="protein sequence ID" value="ENSMUSP00000128308.2"/>
    <property type="gene ID" value="ENSMUSG00000023885.10"/>
</dbReference>
<dbReference type="GeneID" id="21826"/>
<dbReference type="KEGG" id="mmu:21826"/>
<dbReference type="UCSC" id="uc008anb.2">
    <property type="organism name" value="mouse"/>
</dbReference>
<dbReference type="AGR" id="MGI:98738"/>
<dbReference type="CTD" id="7058"/>
<dbReference type="MGI" id="MGI:98738">
    <property type="gene designation" value="Thbs2"/>
</dbReference>
<dbReference type="VEuPathDB" id="HostDB:ENSMUSG00000023885"/>
<dbReference type="eggNOG" id="ENOG502QRK8">
    <property type="taxonomic scope" value="Eukaryota"/>
</dbReference>
<dbReference type="GeneTree" id="ENSGT00940000157846"/>
<dbReference type="HOGENOM" id="CLU_009257_0_0_1"/>
<dbReference type="InParanoid" id="Q03350"/>
<dbReference type="OMA" id="MPGVMLQ"/>
<dbReference type="OrthoDB" id="14563at2759"/>
<dbReference type="PhylomeDB" id="Q03350"/>
<dbReference type="TreeFam" id="TF324917"/>
<dbReference type="Reactome" id="R-MMU-186797">
    <property type="pathway name" value="Signaling by PDGF"/>
</dbReference>
<dbReference type="Reactome" id="R-MMU-5173214">
    <property type="pathway name" value="O-glycosylation of TSR domain-containing proteins"/>
</dbReference>
<dbReference type="BioGRID-ORCS" id="21826">
    <property type="hits" value="0 hits in 80 CRISPR screens"/>
</dbReference>
<dbReference type="ChiTaRS" id="Thbs2">
    <property type="organism name" value="mouse"/>
</dbReference>
<dbReference type="PRO" id="PR:Q03350"/>
<dbReference type="Proteomes" id="UP000000589">
    <property type="component" value="Chromosome 17"/>
</dbReference>
<dbReference type="RNAct" id="Q03350">
    <property type="molecule type" value="protein"/>
</dbReference>
<dbReference type="Bgee" id="ENSMUSG00000023885">
    <property type="expression patterns" value="Expressed in vault of skull and 193 other cell types or tissues"/>
</dbReference>
<dbReference type="GO" id="GO:0005604">
    <property type="term" value="C:basement membrane"/>
    <property type="evidence" value="ECO:0000314"/>
    <property type="project" value="MGI"/>
</dbReference>
<dbReference type="GO" id="GO:0031012">
    <property type="term" value="C:extracellular matrix"/>
    <property type="evidence" value="ECO:0000314"/>
    <property type="project" value="MGI"/>
</dbReference>
<dbReference type="GO" id="GO:0005576">
    <property type="term" value="C:extracellular region"/>
    <property type="evidence" value="ECO:0007669"/>
    <property type="project" value="InterPro"/>
</dbReference>
<dbReference type="GO" id="GO:0031091">
    <property type="term" value="C:platelet alpha granule"/>
    <property type="evidence" value="ECO:0007669"/>
    <property type="project" value="Ensembl"/>
</dbReference>
<dbReference type="GO" id="GO:0005509">
    <property type="term" value="F:calcium ion binding"/>
    <property type="evidence" value="ECO:0007669"/>
    <property type="project" value="InterPro"/>
</dbReference>
<dbReference type="GO" id="GO:0008201">
    <property type="term" value="F:heparin binding"/>
    <property type="evidence" value="ECO:0007669"/>
    <property type="project" value="UniProtKB-KW"/>
</dbReference>
<dbReference type="GO" id="GO:0007155">
    <property type="term" value="P:cell adhesion"/>
    <property type="evidence" value="ECO:0007669"/>
    <property type="project" value="UniProtKB-KW"/>
</dbReference>
<dbReference type="GO" id="GO:0016525">
    <property type="term" value="P:negative regulation of angiogenesis"/>
    <property type="evidence" value="ECO:0000315"/>
    <property type="project" value="UniProtKB"/>
</dbReference>
<dbReference type="GO" id="GO:0051965">
    <property type="term" value="P:positive regulation of synapse assembly"/>
    <property type="evidence" value="ECO:0007669"/>
    <property type="project" value="Ensembl"/>
</dbReference>
<dbReference type="FunFam" id="2.20.100.10:FF:000004">
    <property type="entry name" value="Adhesion G protein-coupled receptor B2"/>
    <property type="match status" value="1"/>
</dbReference>
<dbReference type="FunFam" id="4.10.1080.10:FF:000004">
    <property type="entry name" value="Cartilage oligomeric matrix protein"/>
    <property type="match status" value="1"/>
</dbReference>
<dbReference type="FunFam" id="2.20.100.10:FF:000007">
    <property type="entry name" value="Thrombospondin 1"/>
    <property type="match status" value="2"/>
</dbReference>
<dbReference type="FunFam" id="2.60.120.200:FF:000009">
    <property type="entry name" value="Thrombospondin 1"/>
    <property type="match status" value="1"/>
</dbReference>
<dbReference type="FunFam" id="2.10.25.10:FF:000070">
    <property type="entry name" value="Thrombospondin 2"/>
    <property type="match status" value="1"/>
</dbReference>
<dbReference type="FunFam" id="2.60.120.200:FF:000067">
    <property type="entry name" value="Thrombospondin 2"/>
    <property type="match status" value="1"/>
</dbReference>
<dbReference type="FunFam" id="2.10.25.10:FF:000025">
    <property type="entry name" value="Thrombospondin 3"/>
    <property type="match status" value="1"/>
</dbReference>
<dbReference type="FunFam" id="2.10.25.10:FF:000027">
    <property type="entry name" value="Thrombospondin 3"/>
    <property type="match status" value="1"/>
</dbReference>
<dbReference type="FunFam" id="4.10.1080.10:FF:000001">
    <property type="entry name" value="Thrombospondin 3"/>
    <property type="match status" value="1"/>
</dbReference>
<dbReference type="FunFam" id="4.10.1080.10:FF:000002">
    <property type="entry name" value="Thrombospondin 3"/>
    <property type="match status" value="1"/>
</dbReference>
<dbReference type="Gene3D" id="2.60.120.200">
    <property type="match status" value="2"/>
</dbReference>
<dbReference type="Gene3D" id="6.20.200.20">
    <property type="match status" value="1"/>
</dbReference>
<dbReference type="Gene3D" id="2.10.25.10">
    <property type="entry name" value="Laminin"/>
    <property type="match status" value="3"/>
</dbReference>
<dbReference type="Gene3D" id="2.20.100.10">
    <property type="entry name" value="Thrombospondin type-1 (TSP1) repeat"/>
    <property type="match status" value="3"/>
</dbReference>
<dbReference type="Gene3D" id="4.10.1080.10">
    <property type="entry name" value="TSP type-3 repeat"/>
    <property type="match status" value="2"/>
</dbReference>
<dbReference type="InterPro" id="IPR013320">
    <property type="entry name" value="ConA-like_dom_sf"/>
</dbReference>
<dbReference type="InterPro" id="IPR001881">
    <property type="entry name" value="EGF-like_Ca-bd_dom"/>
</dbReference>
<dbReference type="InterPro" id="IPR000742">
    <property type="entry name" value="EGF-like_dom"/>
</dbReference>
<dbReference type="InterPro" id="IPR024731">
    <property type="entry name" value="EGF_dom"/>
</dbReference>
<dbReference type="InterPro" id="IPR003367">
    <property type="entry name" value="Thrombospondin_3-like_rpt"/>
</dbReference>
<dbReference type="InterPro" id="IPR017897">
    <property type="entry name" value="Thrombospondin_3_rpt"/>
</dbReference>
<dbReference type="InterPro" id="IPR008859">
    <property type="entry name" value="Thrombospondin_C"/>
</dbReference>
<dbReference type="InterPro" id="IPR000884">
    <property type="entry name" value="TSP1_rpt"/>
</dbReference>
<dbReference type="InterPro" id="IPR036383">
    <property type="entry name" value="TSP1_rpt_sf"/>
</dbReference>
<dbReference type="InterPro" id="IPR028974">
    <property type="entry name" value="TSP_type-3_rpt"/>
</dbReference>
<dbReference type="InterPro" id="IPR048287">
    <property type="entry name" value="TSPN-like_N"/>
</dbReference>
<dbReference type="InterPro" id="IPR001007">
    <property type="entry name" value="VWF_dom"/>
</dbReference>
<dbReference type="PANTHER" id="PTHR10199">
    <property type="entry name" value="THROMBOSPONDIN"/>
    <property type="match status" value="1"/>
</dbReference>
<dbReference type="PANTHER" id="PTHR10199:SF10">
    <property type="entry name" value="THROMBOSPONDIN-2"/>
    <property type="match status" value="1"/>
</dbReference>
<dbReference type="Pfam" id="PF12947">
    <property type="entry name" value="EGF_3"/>
    <property type="match status" value="1"/>
</dbReference>
<dbReference type="Pfam" id="PF00090">
    <property type="entry name" value="TSP_1"/>
    <property type="match status" value="3"/>
</dbReference>
<dbReference type="Pfam" id="PF02412">
    <property type="entry name" value="TSP_3"/>
    <property type="match status" value="7"/>
</dbReference>
<dbReference type="Pfam" id="PF05735">
    <property type="entry name" value="TSP_C"/>
    <property type="match status" value="1"/>
</dbReference>
<dbReference type="Pfam" id="PF00093">
    <property type="entry name" value="VWC"/>
    <property type="match status" value="1"/>
</dbReference>
<dbReference type="PRINTS" id="PR01705">
    <property type="entry name" value="TSP1REPEAT"/>
</dbReference>
<dbReference type="SMART" id="SM00181">
    <property type="entry name" value="EGF"/>
    <property type="match status" value="3"/>
</dbReference>
<dbReference type="SMART" id="SM00179">
    <property type="entry name" value="EGF_CA"/>
    <property type="match status" value="2"/>
</dbReference>
<dbReference type="SMART" id="SM00209">
    <property type="entry name" value="TSP1"/>
    <property type="match status" value="3"/>
</dbReference>
<dbReference type="SMART" id="SM00210">
    <property type="entry name" value="TSPN"/>
    <property type="match status" value="1"/>
</dbReference>
<dbReference type="SMART" id="SM00214">
    <property type="entry name" value="VWC"/>
    <property type="match status" value="1"/>
</dbReference>
<dbReference type="SUPFAM" id="SSF49899">
    <property type="entry name" value="Concanavalin A-like lectins/glucanases"/>
    <property type="match status" value="2"/>
</dbReference>
<dbReference type="SUPFAM" id="SSF57196">
    <property type="entry name" value="EGF/Laminin"/>
    <property type="match status" value="1"/>
</dbReference>
<dbReference type="SUPFAM" id="SSF57603">
    <property type="entry name" value="FnI-like domain"/>
    <property type="match status" value="1"/>
</dbReference>
<dbReference type="SUPFAM" id="SSF103647">
    <property type="entry name" value="TSP type-3 repeat"/>
    <property type="match status" value="3"/>
</dbReference>
<dbReference type="SUPFAM" id="SSF82895">
    <property type="entry name" value="TSP-1 type 1 repeat"/>
    <property type="match status" value="3"/>
</dbReference>
<dbReference type="PROSITE" id="PS01186">
    <property type="entry name" value="EGF_2"/>
    <property type="match status" value="1"/>
</dbReference>
<dbReference type="PROSITE" id="PS50026">
    <property type="entry name" value="EGF_3"/>
    <property type="match status" value="2"/>
</dbReference>
<dbReference type="PROSITE" id="PS50092">
    <property type="entry name" value="TSP1"/>
    <property type="match status" value="3"/>
</dbReference>
<dbReference type="PROSITE" id="PS51234">
    <property type="entry name" value="TSP3"/>
    <property type="match status" value="8"/>
</dbReference>
<dbReference type="PROSITE" id="PS51236">
    <property type="entry name" value="TSP_CTER"/>
    <property type="match status" value="1"/>
</dbReference>
<dbReference type="PROSITE" id="PS01208">
    <property type="entry name" value="VWFC_1"/>
    <property type="match status" value="1"/>
</dbReference>
<dbReference type="PROSITE" id="PS50184">
    <property type="entry name" value="VWFC_2"/>
    <property type="match status" value="1"/>
</dbReference>
<comment type="function">
    <text evidence="8">Adhesive glycoprotein that mediates cell-to-cell and cell-to-matrix interactions. Ligand for CD36 mediating antiangiogenic properties.</text>
</comment>
<comment type="subunit">
    <text evidence="1 8">Homotrimer; disulfide-linked. Can bind to fibrinogen, fibronectin, laminin and type V collagen (By similarity). Interacts (via the TSP type I repeats) with CD36; the interaction conveys an antiangiogenic effect. Interacts (via the TSP type I repeats) with HRG; the interaction blocks the antiangiogenic effect of THBS2 with CD36. Can bind to fibrinogen, fibronectin, laminin.</text>
</comment>
<comment type="interaction">
    <interactant intactId="EBI-4567830">
        <id>Q03350</id>
    </interactant>
    <interactant intactId="EBI-4567800">
        <id>Q63722</id>
        <label>Jag1</label>
    </interactant>
    <organismsDiffer>true</organismsDiffer>
    <experiments>2</experiments>
</comment>
<comment type="interaction">
    <interactant intactId="EBI-4567830">
        <id>Q03350</id>
    </interactant>
    <interactant intactId="EBI-1046087">
        <id>Q07954</id>
        <label>LRP1</label>
    </interactant>
    <organismsDiffer>true</organismsDiffer>
    <experiments>2</experiments>
</comment>
<comment type="similarity">
    <text evidence="9">Belongs to the thrombospondin family.</text>
</comment>
<feature type="signal peptide" evidence="2">
    <location>
        <begin position="1"/>
        <end position="18"/>
    </location>
</feature>
<feature type="chain" id="PRO_0000035847" description="Thrombospondin-2">
    <location>
        <begin position="19"/>
        <end position="1172"/>
    </location>
</feature>
<feature type="domain" description="Laminin G-like">
    <location>
        <begin position="19"/>
        <end position="215"/>
    </location>
</feature>
<feature type="domain" description="VWFC" evidence="5">
    <location>
        <begin position="318"/>
        <end position="375"/>
    </location>
</feature>
<feature type="domain" description="TSP type-1 1" evidence="4">
    <location>
        <begin position="381"/>
        <end position="431"/>
    </location>
</feature>
<feature type="domain" description="TSP type-1 2" evidence="4">
    <location>
        <begin position="437"/>
        <end position="492"/>
    </location>
</feature>
<feature type="domain" description="TSP type-1 3" evidence="4">
    <location>
        <begin position="494"/>
        <end position="549"/>
    </location>
</feature>
<feature type="domain" description="EGF-like 1" evidence="3">
    <location>
        <begin position="549"/>
        <end position="589"/>
    </location>
</feature>
<feature type="domain" description="EGF-like 2" evidence="3">
    <location>
        <begin position="648"/>
        <end position="692"/>
    </location>
</feature>
<feature type="repeat" description="TSP type-3 1">
    <location>
        <begin position="693"/>
        <end position="728"/>
    </location>
</feature>
<feature type="repeat" description="TSP type-3 2">
    <location>
        <begin position="729"/>
        <end position="764"/>
    </location>
</feature>
<feature type="repeat" description="TSP type-3 3">
    <location>
        <begin position="765"/>
        <end position="787"/>
    </location>
</feature>
<feature type="repeat" description="TSP type-3 4">
    <location>
        <begin position="788"/>
        <end position="823"/>
    </location>
</feature>
<feature type="repeat" description="TSP type-3 5">
    <location>
        <begin position="824"/>
        <end position="846"/>
    </location>
</feature>
<feature type="repeat" description="TSP type-3 6">
    <location>
        <begin position="847"/>
        <end position="884"/>
    </location>
</feature>
<feature type="repeat" description="TSP type-3 7">
    <location>
        <begin position="885"/>
        <end position="920"/>
    </location>
</feature>
<feature type="repeat" description="TSP type-3 8">
    <location>
        <begin position="921"/>
        <end position="956"/>
    </location>
</feature>
<feature type="domain" description="TSP C-terminal" evidence="6">
    <location>
        <begin position="960"/>
        <end position="1172"/>
    </location>
</feature>
<feature type="region of interest" description="Heparin-binding" evidence="2">
    <location>
        <begin position="19"/>
        <end position="232"/>
    </location>
</feature>
<feature type="region of interest" description="Disordered" evidence="7">
    <location>
        <begin position="727"/>
        <end position="752"/>
    </location>
</feature>
<feature type="region of interest" description="Disordered" evidence="7">
    <location>
        <begin position="846"/>
        <end position="938"/>
    </location>
</feature>
<feature type="short sequence motif" description="Cell attachment site" evidence="2">
    <location>
        <begin position="928"/>
        <end position="930"/>
    </location>
</feature>
<feature type="compositionally biased region" description="Acidic residues" evidence="7">
    <location>
        <begin position="739"/>
        <end position="749"/>
    </location>
</feature>
<feature type="compositionally biased region" description="Acidic residues" evidence="7">
    <location>
        <begin position="847"/>
        <end position="866"/>
    </location>
</feature>
<feature type="compositionally biased region" description="Polar residues" evidence="7">
    <location>
        <begin position="870"/>
        <end position="884"/>
    </location>
</feature>
<feature type="compositionally biased region" description="Basic and acidic residues" evidence="7">
    <location>
        <begin position="885"/>
        <end position="895"/>
    </location>
</feature>
<feature type="compositionally biased region" description="Acidic residues" evidence="7">
    <location>
        <begin position="896"/>
        <end position="905"/>
    </location>
</feature>
<feature type="compositionally biased region" description="Basic and acidic residues" evidence="7">
    <location>
        <begin position="925"/>
        <end position="935"/>
    </location>
</feature>
<feature type="glycosylation site" description="N-linked (GlcNAc...) asparagine" evidence="2">
    <location>
        <position position="151"/>
    </location>
</feature>
<feature type="glycosylation site" description="N-linked (GlcNAc...) asparagine" evidence="2">
    <location>
        <position position="316"/>
    </location>
</feature>
<feature type="glycosylation site" description="N-linked (GlcNAc...) asparagine" evidence="2">
    <location>
        <position position="330"/>
    </location>
</feature>
<feature type="glycosylation site" description="N-linked (GlcNAc...) asparagine" evidence="2">
    <location>
        <position position="457"/>
    </location>
</feature>
<feature type="glycosylation site" description="N-linked (GlcNAc...) asparagine" evidence="2">
    <location>
        <position position="584"/>
    </location>
</feature>
<feature type="glycosylation site" description="N-linked (GlcNAc...) asparagine" evidence="2">
    <location>
        <position position="710"/>
    </location>
</feature>
<feature type="glycosylation site" description="N-linked (GlcNAc...) asparagine" evidence="2">
    <location>
        <position position="1069"/>
    </location>
</feature>
<feature type="disulfide bond" description="Interchain" evidence="9">
    <location>
        <position position="266"/>
    </location>
</feature>
<feature type="disulfide bond" description="Interchain" evidence="9">
    <location>
        <position position="270"/>
    </location>
</feature>
<feature type="disulfide bond" evidence="1">
    <location>
        <begin position="393"/>
        <end position="425"/>
    </location>
</feature>
<feature type="disulfide bond" evidence="1">
    <location>
        <begin position="397"/>
        <end position="430"/>
    </location>
</feature>
<feature type="disulfide bond" evidence="1">
    <location>
        <begin position="408"/>
        <end position="415"/>
    </location>
</feature>
<feature type="disulfide bond" evidence="1">
    <location>
        <begin position="449"/>
        <end position="486"/>
    </location>
</feature>
<feature type="disulfide bond" evidence="1">
    <location>
        <begin position="453"/>
        <end position="491"/>
    </location>
</feature>
<feature type="disulfide bond" evidence="1">
    <location>
        <begin position="464"/>
        <end position="476"/>
    </location>
</feature>
<feature type="disulfide bond" evidence="1">
    <location>
        <begin position="506"/>
        <end position="543"/>
    </location>
</feature>
<feature type="disulfide bond" evidence="1">
    <location>
        <begin position="510"/>
        <end position="548"/>
    </location>
</feature>
<feature type="disulfide bond" evidence="1">
    <location>
        <begin position="521"/>
        <end position="533"/>
    </location>
</feature>
<feature type="disulfide bond" evidence="1">
    <location>
        <begin position="553"/>
        <end position="564"/>
    </location>
</feature>
<feature type="disulfide bond" evidence="1">
    <location>
        <begin position="558"/>
        <end position="574"/>
    </location>
</feature>
<feature type="disulfide bond" evidence="1">
    <location>
        <begin position="577"/>
        <end position="588"/>
    </location>
</feature>
<feature type="disulfide bond" evidence="1">
    <location>
        <begin position="594"/>
        <end position="610"/>
    </location>
</feature>
<feature type="disulfide bond" evidence="1">
    <location>
        <begin position="601"/>
        <end position="619"/>
    </location>
</feature>
<feature type="disulfide bond" evidence="1">
    <location>
        <begin position="622"/>
        <end position="646"/>
    </location>
</feature>
<feature type="disulfide bond" evidence="1">
    <location>
        <begin position="652"/>
        <end position="665"/>
    </location>
</feature>
<feature type="disulfide bond" evidence="1">
    <location>
        <begin position="659"/>
        <end position="678"/>
    </location>
</feature>
<feature type="disulfide bond" evidence="1">
    <location>
        <begin position="680"/>
        <end position="691"/>
    </location>
</feature>
<feature type="disulfide bond" evidence="1">
    <location>
        <begin position="707"/>
        <end position="715"/>
    </location>
</feature>
<feature type="disulfide bond" evidence="1">
    <location>
        <begin position="720"/>
        <end position="740"/>
    </location>
</feature>
<feature type="disulfide bond" evidence="1">
    <location>
        <begin position="756"/>
        <end position="776"/>
    </location>
</feature>
<feature type="disulfide bond" evidence="1">
    <location>
        <begin position="779"/>
        <end position="799"/>
    </location>
</feature>
<feature type="disulfide bond" evidence="1">
    <location>
        <begin position="815"/>
        <end position="835"/>
    </location>
</feature>
<feature type="disulfide bond" evidence="1">
    <location>
        <begin position="838"/>
        <end position="858"/>
    </location>
</feature>
<feature type="disulfide bond" evidence="1">
    <location>
        <begin position="876"/>
        <end position="896"/>
    </location>
</feature>
<feature type="disulfide bond" evidence="1">
    <location>
        <begin position="912"/>
        <end position="932"/>
    </location>
</feature>
<feature type="disulfide bond" evidence="1">
    <location>
        <begin position="948"/>
        <end position="1169"/>
    </location>
</feature>
<feature type="sequence conflict" description="In Ref. 1; AAA53064 and 4; AAA40432." evidence="9" ref="1 4">
    <original>G</original>
    <variation>S</variation>
    <location>
        <position position="225"/>
    </location>
</feature>
<reference key="1">
    <citation type="journal article" date="1992" name="J. Biol. Chem.">
        <title>Characterization of mouse thrombospondin 2 sequence and expression during cell growth and development.</title>
        <authorList>
            <person name="Laherty C.D."/>
            <person name="O'Rourke K."/>
            <person name="Wolf F.W."/>
            <person name="Katz R."/>
            <person name="Seldin M.F."/>
            <person name="Dixit V.M."/>
        </authorList>
    </citation>
    <scope>NUCLEOTIDE SEQUENCE [MRNA]</scope>
</reference>
<reference key="2">
    <citation type="submission" date="2002-10" db="EMBL/GenBank/DDBJ databases">
        <title>Genomic sequence analysis in the mouse t-complex region.</title>
        <authorList>
            <person name="Brathwaite M."/>
            <person name="Waeltz P."/>
            <person name="Qian Y."/>
            <person name="Dudekula D."/>
            <person name="Schlessinger D."/>
            <person name="Nagaraja R."/>
        </authorList>
    </citation>
    <scope>NUCLEOTIDE SEQUENCE [GENOMIC DNA]</scope>
    <source>
        <strain>129S6/SvEvTac</strain>
    </source>
</reference>
<reference key="3">
    <citation type="submission" date="2005-09" db="EMBL/GenBank/DDBJ databases">
        <authorList>
            <person name="Mural R.J."/>
            <person name="Adams M.D."/>
            <person name="Myers E.W."/>
            <person name="Smith H.O."/>
            <person name="Venter J.C."/>
        </authorList>
    </citation>
    <scope>NUCLEOTIDE SEQUENCE [LARGE SCALE GENOMIC DNA]</scope>
</reference>
<reference key="4">
    <citation type="journal article" date="1991" name="J. Biol. Chem.">
        <title>A second, expressed thrombospondin gene (Thbs2) exists in the mouse genome.</title>
        <authorList>
            <person name="Bornstein P."/>
            <person name="O'Rourke K."/>
            <person name="Wikstrom K."/>
            <person name="Wolf F.W."/>
            <person name="Katz R."/>
            <person name="Li P."/>
            <person name="Dixit V.M."/>
        </authorList>
    </citation>
    <scope>NUCLEOTIDE SEQUENCE [MRNA] OF 1-873</scope>
</reference>
<reference key="5">
    <citation type="journal article" date="2005" name="Matrix Biol.">
        <title>The antiangiogenic effect of thrombospondin-2 is mediated by CD36 and modulated by histidine-rich glycoprotein.</title>
        <authorList>
            <person name="Simantov R."/>
            <person name="Febbraio M."/>
            <person name="Silverstein R.L."/>
        </authorList>
    </citation>
    <scope>INTERACTION WITH CD36 AND HRG</scope>
    <scope>FUNCTION</scope>
</reference>
<protein>
    <recommendedName>
        <fullName>Thrombospondin-2</fullName>
    </recommendedName>
</protein>
<organism>
    <name type="scientific">Mus musculus</name>
    <name type="common">Mouse</name>
    <dbReference type="NCBI Taxonomy" id="10090"/>
    <lineage>
        <taxon>Eukaryota</taxon>
        <taxon>Metazoa</taxon>
        <taxon>Chordata</taxon>
        <taxon>Craniata</taxon>
        <taxon>Vertebrata</taxon>
        <taxon>Euteleostomi</taxon>
        <taxon>Mammalia</taxon>
        <taxon>Eutheria</taxon>
        <taxon>Euarchontoglires</taxon>
        <taxon>Glires</taxon>
        <taxon>Rodentia</taxon>
        <taxon>Myomorpha</taxon>
        <taxon>Muroidea</taxon>
        <taxon>Muridae</taxon>
        <taxon>Murinae</taxon>
        <taxon>Mus</taxon>
        <taxon>Mus</taxon>
    </lineage>
</organism>
<accession>Q03350</accession>
<accession>Q8CG21</accession>
<name>TSP2_MOUSE</name>
<proteinExistence type="evidence at protein level"/>
<sequence>MLWALALLALGIGPRASAGDHVKDTSFDLFSISNINRKTIGAKQFRGPDPGVPAYRFVRFDYIPPVNTDDLNRIVKLARRKEGFFLTAQLKQDRKSRGTLLVLEGPGTSQRQFEIVSNGPGDTLDLNYWVEGNQHTNFLEDVGLADSQWKNVTVQVASDTYSLYVGCDLIDSVTLEEPFYEQLEVDRSRMYVAKGASRESHFRGLLQNVHLVFADSVEDILSKKGCQHSQGAEVNTISEHTETLHLSPHITTDLVVQGVEKAQEVCTHSCEELSNMMNELSGLHVMVNQLSKNLERVSSDNQFLLELIGGPLKTRNMSACVQEGRIFAENETWVVDSCTTCTCKKFKTVCHQITCSPATCANPSFVEGECCPSCSHSADSDEGWSPWAEWTECSVTCGSGTQQRGRSCDVTSNTCLGPSIQTRTCSLGKCDTRIRQNGGWSHWSPWSSCSVTCGVGNVTRIRLCNSPVPQMGGKNCKGSGRETKPCQRDPCPIDGRWSPWSPWSACTVTCAGGIRERSRVCNSPEPQYGGKDCVGDVTEHQMCNKRSCPIDGCLSNPCFPGAKCNSFPDGSWSCGSCPVGFLGNGTHCEDLDECAVVTDICFSTNKAPRCVNTNPGFHCLPCPPRYKGNQPFGVGLEDARTEKQVCEPENPCKDKTHSCHKNAECIYLGHFSDPMYKCECQIGYAGDGLICGEDSDLDGWPNNNLVCATNATYHCIKDNCPKLPNSGQEDFDKDGIGDACDEDDDNDGVSDEKDNCQLLFNPRQLDYDKDEVGDRCDNCPYVHNPAQIDTDNNGEGDACSVDIDGDDVFNERDNCPYVYNTDQRDTDGDGVGDHCDNCPLMHNPDQIDQDNDLVGDQCDNNEDIDDDGHQNNQDNCPYISNSNQADHDNDGKGDACDSDDDNDGVPDDRDNCRLVFNPDQEDSDGDGRGDICKDDFDNDNVPDIDDVCPENNAITETDFRNFQMVPLDPKGTTQIDPNWVIRHQGKELVQTANSDPGIAVGFDEFGSVDFSGTFYVNTDRDDDYAGFVFGYQSSSRFYVVMWKQVTQTYWEDKPSRAYGYSGVSLKVVNSTTGTGEHLRNALWHTGNTEGQVRTLWHDPKNIGWKDYTAYRWHLIHRPKTGYMRVLVHEGKQVMADSGPIYDQTYAGGRLGLFVFSQEMVYFSDLKYECRDA</sequence>
<gene>
    <name type="primary">Thbs2</name>
    <name type="synonym">Tsp2</name>
</gene>
<evidence type="ECO:0000250" key="1"/>
<evidence type="ECO:0000255" key="2"/>
<evidence type="ECO:0000255" key="3">
    <source>
        <dbReference type="PROSITE-ProRule" id="PRU00076"/>
    </source>
</evidence>
<evidence type="ECO:0000255" key="4">
    <source>
        <dbReference type="PROSITE-ProRule" id="PRU00210"/>
    </source>
</evidence>
<evidence type="ECO:0000255" key="5">
    <source>
        <dbReference type="PROSITE-ProRule" id="PRU00220"/>
    </source>
</evidence>
<evidence type="ECO:0000255" key="6">
    <source>
        <dbReference type="PROSITE-ProRule" id="PRU00635"/>
    </source>
</evidence>
<evidence type="ECO:0000256" key="7">
    <source>
        <dbReference type="SAM" id="MobiDB-lite"/>
    </source>
</evidence>
<evidence type="ECO:0000269" key="8">
    <source>
    </source>
</evidence>
<evidence type="ECO:0000305" key="9"/>
<keyword id="KW-0106">Calcium</keyword>
<keyword id="KW-0130">Cell adhesion</keyword>
<keyword id="KW-1015">Disulfide bond</keyword>
<keyword id="KW-0245">EGF-like domain</keyword>
<keyword id="KW-0325">Glycoprotein</keyword>
<keyword id="KW-0358">Heparin-binding</keyword>
<keyword id="KW-1185">Reference proteome</keyword>
<keyword id="KW-0677">Repeat</keyword>
<keyword id="KW-0732">Signal</keyword>